<feature type="chain" id="PRO_0000308492" description="U3 small nucleolar RNA-associated protein 10">
    <location>
        <begin position="1"/>
        <end position="1774"/>
    </location>
</feature>
<feature type="repeat" description="HEAT" evidence="2">
    <location>
        <begin position="1734"/>
        <end position="1772"/>
    </location>
</feature>
<feature type="region of interest" description="Disordered" evidence="3">
    <location>
        <begin position="1209"/>
        <end position="1228"/>
    </location>
</feature>
<proteinExistence type="inferred from homology"/>
<dbReference type="EMBL" id="AE016819">
    <property type="protein sequence ID" value="AAS53445.1"/>
    <property type="molecule type" value="Genomic_DNA"/>
</dbReference>
<dbReference type="RefSeq" id="NP_985621.1">
    <property type="nucleotide sequence ID" value="NM_210975.2"/>
</dbReference>
<dbReference type="SMR" id="Q754J8"/>
<dbReference type="FunCoup" id="Q754J8">
    <property type="interactions" value="1217"/>
</dbReference>
<dbReference type="STRING" id="284811.Q754J8"/>
<dbReference type="EnsemblFungi" id="AAS53445">
    <property type="protein sequence ID" value="AAS53445"/>
    <property type="gene ID" value="AGOS_AFR074C"/>
</dbReference>
<dbReference type="GeneID" id="4621863"/>
<dbReference type="KEGG" id="ago:AGOS_AFR074C"/>
<dbReference type="eggNOG" id="KOG1837">
    <property type="taxonomic scope" value="Eukaryota"/>
</dbReference>
<dbReference type="HOGENOM" id="CLU_001128_3_1_1"/>
<dbReference type="InParanoid" id="Q754J8"/>
<dbReference type="OMA" id="GEPFDRY"/>
<dbReference type="OrthoDB" id="31183at2759"/>
<dbReference type="Proteomes" id="UP000000591">
    <property type="component" value="Chromosome VI"/>
</dbReference>
<dbReference type="GO" id="GO:0030686">
    <property type="term" value="C:90S preribosome"/>
    <property type="evidence" value="ECO:0000318"/>
    <property type="project" value="GO_Central"/>
</dbReference>
<dbReference type="GO" id="GO:0030688">
    <property type="term" value="C:preribosome, small subunit precursor"/>
    <property type="evidence" value="ECO:0007669"/>
    <property type="project" value="EnsemblFungi"/>
</dbReference>
<dbReference type="GO" id="GO:0033553">
    <property type="term" value="C:rDNA heterochromatin"/>
    <property type="evidence" value="ECO:0007669"/>
    <property type="project" value="EnsemblFungi"/>
</dbReference>
<dbReference type="GO" id="GO:0032040">
    <property type="term" value="C:small-subunit processome"/>
    <property type="evidence" value="ECO:0000318"/>
    <property type="project" value="GO_Central"/>
</dbReference>
<dbReference type="GO" id="GO:0034455">
    <property type="term" value="C:t-UTP complex"/>
    <property type="evidence" value="ECO:0000318"/>
    <property type="project" value="GO_Central"/>
</dbReference>
<dbReference type="GO" id="GO:0030515">
    <property type="term" value="F:snoRNA binding"/>
    <property type="evidence" value="ECO:0000318"/>
    <property type="project" value="GO_Central"/>
</dbReference>
<dbReference type="GO" id="GO:0034511">
    <property type="term" value="F:U3 snoRNA binding"/>
    <property type="evidence" value="ECO:0007669"/>
    <property type="project" value="EnsemblFungi"/>
</dbReference>
<dbReference type="GO" id="GO:0000480">
    <property type="term" value="P:endonucleolytic cleavage in 5'-ETS of tricistronic rRNA transcript (SSU-rRNA, 5.8S rRNA, LSU-rRNA)"/>
    <property type="evidence" value="ECO:0007669"/>
    <property type="project" value="EnsemblFungi"/>
</dbReference>
<dbReference type="GO" id="GO:0000447">
    <property type="term" value="P:endonucleolytic cleavage in ITS1 to separate SSU-rRNA from 5.8S rRNA and LSU-rRNA from tricistronic rRNA transcript (SSU-rRNA, 5.8S rRNA, LSU-rRNA)"/>
    <property type="evidence" value="ECO:0007669"/>
    <property type="project" value="EnsemblFungi"/>
</dbReference>
<dbReference type="GO" id="GO:0000472">
    <property type="term" value="P:endonucleolytic cleavage to generate mature 5'-end of SSU-rRNA from (SSU-rRNA, 5.8S rRNA, LSU-rRNA)"/>
    <property type="evidence" value="ECO:0007669"/>
    <property type="project" value="EnsemblFungi"/>
</dbReference>
<dbReference type="GO" id="GO:0000462">
    <property type="term" value="P:maturation of SSU-rRNA from tricistronic rRNA transcript (SSU-rRNA, 5.8S rRNA, LSU-rRNA)"/>
    <property type="evidence" value="ECO:0000318"/>
    <property type="project" value="GO_Central"/>
</dbReference>
<dbReference type="GO" id="GO:0045943">
    <property type="term" value="P:positive regulation of transcription by RNA polymerase I"/>
    <property type="evidence" value="ECO:0000318"/>
    <property type="project" value="GO_Central"/>
</dbReference>
<dbReference type="FunFam" id="1.25.10.10:FF:000530">
    <property type="entry name" value="UTP10p Nucleolar protein"/>
    <property type="match status" value="1"/>
</dbReference>
<dbReference type="Gene3D" id="1.25.10.10">
    <property type="entry name" value="Leucine-rich Repeat Variant"/>
    <property type="match status" value="1"/>
</dbReference>
<dbReference type="InterPro" id="IPR011989">
    <property type="entry name" value="ARM-like"/>
</dbReference>
<dbReference type="InterPro" id="IPR016024">
    <property type="entry name" value="ARM-type_fold"/>
</dbReference>
<dbReference type="InterPro" id="IPR012954">
    <property type="entry name" value="BP28_C_dom"/>
</dbReference>
<dbReference type="InterPro" id="IPR021133">
    <property type="entry name" value="HEAT_type_2"/>
</dbReference>
<dbReference type="InterPro" id="IPR056473">
    <property type="entry name" value="HEAT_Utp10/HEAT1"/>
</dbReference>
<dbReference type="InterPro" id="IPR022125">
    <property type="entry name" value="U3snoRNP10_N"/>
</dbReference>
<dbReference type="InterPro" id="IPR040191">
    <property type="entry name" value="UTP10"/>
</dbReference>
<dbReference type="PANTHER" id="PTHR13457">
    <property type="entry name" value="BAP28"/>
    <property type="match status" value="1"/>
</dbReference>
<dbReference type="PANTHER" id="PTHR13457:SF1">
    <property type="entry name" value="HEAT REPEAT-CONTAINING PROTEIN 1"/>
    <property type="match status" value="1"/>
</dbReference>
<dbReference type="Pfam" id="PF08146">
    <property type="entry name" value="BP28CT"/>
    <property type="match status" value="1"/>
</dbReference>
<dbReference type="Pfam" id="PF23243">
    <property type="entry name" value="HEAT_HEATR1"/>
    <property type="match status" value="1"/>
</dbReference>
<dbReference type="Pfam" id="PF12397">
    <property type="entry name" value="U3snoRNP10"/>
    <property type="match status" value="1"/>
</dbReference>
<dbReference type="SMART" id="SM01036">
    <property type="entry name" value="BP28CT"/>
    <property type="match status" value="1"/>
</dbReference>
<dbReference type="SUPFAM" id="SSF48371">
    <property type="entry name" value="ARM repeat"/>
    <property type="match status" value="2"/>
</dbReference>
<dbReference type="PROSITE" id="PS50077">
    <property type="entry name" value="HEAT_REPEAT"/>
    <property type="match status" value="1"/>
</dbReference>
<name>UTP10_EREGS</name>
<keyword id="KW-0539">Nucleus</keyword>
<keyword id="KW-1185">Reference proteome</keyword>
<keyword id="KW-0677">Repeat</keyword>
<keyword id="KW-0687">Ribonucleoprotein</keyword>
<keyword id="KW-0690">Ribosome biogenesis</keyword>
<keyword id="KW-0698">rRNA processing</keyword>
<accession>Q754J8</accession>
<evidence type="ECO:0000250" key="1">
    <source>
        <dbReference type="UniProtKB" id="P42945"/>
    </source>
</evidence>
<evidence type="ECO:0000255" key="2"/>
<evidence type="ECO:0000256" key="3">
    <source>
        <dbReference type="SAM" id="MobiDB-lite"/>
    </source>
</evidence>
<evidence type="ECO:0000305" key="4"/>
<evidence type="ECO:0000312" key="5">
    <source>
        <dbReference type="EMBL" id="AAS53445.1"/>
    </source>
</evidence>
<reference evidence="5" key="1">
    <citation type="journal article" date="2004" name="Science">
        <title>The Ashbya gossypii genome as a tool for mapping the ancient Saccharomyces cerevisiae genome.</title>
        <authorList>
            <person name="Dietrich F.S."/>
            <person name="Voegeli S."/>
            <person name="Brachat S."/>
            <person name="Lerch A."/>
            <person name="Gates K."/>
            <person name="Steiner S."/>
            <person name="Mohr C."/>
            <person name="Poehlmann R."/>
            <person name="Luedi P."/>
            <person name="Choi S."/>
            <person name="Wing R.A."/>
            <person name="Flavier A."/>
            <person name="Gaffney T.D."/>
            <person name="Philippsen P."/>
        </authorList>
    </citation>
    <scope>NUCLEOTIDE SEQUENCE [LARGE SCALE GENOMIC DNA]</scope>
    <source>
        <strain>ATCC 10895 / CBS 109.51 / FGSC 9923 / NRRL Y-1056</strain>
    </source>
</reference>
<reference key="2">
    <citation type="journal article" date="2013" name="G3 (Bethesda)">
        <title>Genomes of Ashbya fungi isolated from insects reveal four mating-type loci, numerous translocations, lack of transposons, and distinct gene duplications.</title>
        <authorList>
            <person name="Dietrich F.S."/>
            <person name="Voegeli S."/>
            <person name="Kuo S."/>
            <person name="Philippsen P."/>
        </authorList>
    </citation>
    <scope>GENOME REANNOTATION</scope>
    <source>
        <strain>ATCC 10895 / CBS 109.51 / FGSC 9923 / NRRL Y-1056</strain>
    </source>
</reference>
<gene>
    <name evidence="1" type="primary">UTP10</name>
    <name type="ordered locus">AFR074C</name>
</gene>
<sequence>MSSLKEQLAQVAASNATVALDRKRRQKLHSASLIYNPKTAATQDYDFIFDNATSALEELVEIDVRFKVFSRSLFSASSVNIDRNTQTKEQVRTLDQAVNAYLMLASAWWHLTPTLHATEWLVRRFQIHVHNAEMLLLSTLNYYQSPVFKRILNIVKLPPLFSSLANFAKAESVPSNLTIVKLFNDMDFLTLYTSYVGKVVKQKVTYTNQLLFNSCAFINLVAFNSNSEEKLERLVPILLEVCAKLLASPSDDCQMAAHTVLVVLVTALPLKKQILLAATETILANLADSASTKRCAFVTVCKLFQTLKGHGNVDQLPANIYTLFDSKISNDCLIDFLSKKETPADKFVTSYVRSIARYDHGKLNSIVSILKQVKLEKFEVRLIITDLIHLSELLEDKSQLIQLFEFFISIDEDMVLRCLHSLNLTGELFEIRLTTSLFSAERIEPVNGEDVVKGLEASKVAGLAGGAQPFTEFLNKNSAYICTKNISLLVEDDEQASKLLSLFVESVGKKYQPGLFLSSFFTTLESRITFLLRIIVSPGAPVALRLISVSNLSKLIHTIGNDTNVFTLVPVLIVALTDISKNVRAAVKKVLHQISKRPFTKRYFLNDKIYGEGQSVPMLNPKESESWLKTFLDGYLVENYDISQLLIPKKNEKMYLLFWANQALYMPLPQPKLVLMRFLARHESFSSTYSQLWENFLSSYLEQRPQWELKCSKNKTNFCEFESVLVLLLSKKEKNPAAIEFLLGALKSPFEQLASIMAKRLIEIYPTLKQPVQCQIVQDIIESTASADLSYDSIETLQSLALSADVVVSVIKQNMINVDETSNIIKKRRRRSSASNKAALQKEEVSRIAEIHLRKLTILLEALDKIKVQGSEALLTSLFDILADLDTLDNDGGLPVLYAQETLASCMLHTIDSLRATGATPKLRSVRTDILVAAIRASSSPQVQNKLLLVISALALLNPELVLHSIMPIFTFMGAHSLRQDDEFSTMVVEKTVKTVVPALLESGSSSMTDEIEFLLMSFSTAFSHVPKHRRVRLFTTLIKTLQPSSSIAPFLFLLSQQFSAKVENFEIAESKSILEFSRSFMSKFAVLDQLTGIAGLFELVKLLSEPDLKDKTSPRTLLSNGILNYTPSEMFNYKRNTFDFMDKILAEDNQGGNKGENNLKLKLLSALLDPQTEEQVKSDVKDQFAKVLQHNLVFINNVEELCSTQDLTEQGKSDGDESGSEPDNDNPVADMTEILFSLLGHILDLLPISTFVESILPLLGKDTEDIIRKHLTLVIGTKFESEPNSSATYANMTASSLLAIVTDEAEAPGVVQAALNTTSTLVSKFGDRLDASTLTECLKIGVQKLNSSSTDIVVSALAVLTNTVHVLGVKSIGFYAKIVPRALAIFDSVQDTKSDLRKEVQLSVVLLFAAMMKRIPSFLQSNLKDVMRAIFFADEVQNSISLYVISLLVQQLDLKEVLKTLYRIWTTDISKTGNSVAVSLFLTTLESTVEAIDKKSATSQSPTFFKLLLAMFEYRSVSTFDNNTISRIEASVHQIANIYVLKLNDKIFRPLFALTVRWAFDGESVSNLQITKVERLTAFFKFFNKLQESLKSIITSYFTYLLEPTNALLNDFHSGAVSDTNLRRLTLTALTASFKYDRDEYWKSTARFELLAESLVNQLANIEDSIGKYLVKAIAALASNNAGVDEHSKLLHRALVEHMKASCATSQKLWAVKATKLIYAKVGEHWLVLLPQLVPVIAELLEDDDEEVEQEVRTGLVKVVETVLGEPFDRYLT</sequence>
<comment type="function">
    <text evidence="1">Involved in nucleolar processing of pre-18S ribosomal RNA. Involved in ribosome biosynthesis (By similarity).</text>
</comment>
<comment type="subunit">
    <text evidence="1">Component of the ribosomal small subunit (SSU) processome.</text>
</comment>
<comment type="subcellular location">
    <subcellularLocation>
        <location evidence="1">Nucleus</location>
        <location evidence="1">Nucleolus</location>
    </subcellularLocation>
</comment>
<comment type="similarity">
    <text evidence="4">Belongs to the HEATR1/UTP10 family.</text>
</comment>
<organism>
    <name type="scientific">Eremothecium gossypii (strain ATCC 10895 / CBS 109.51 / FGSC 9923 / NRRL Y-1056)</name>
    <name type="common">Yeast</name>
    <name type="synonym">Ashbya gossypii</name>
    <dbReference type="NCBI Taxonomy" id="284811"/>
    <lineage>
        <taxon>Eukaryota</taxon>
        <taxon>Fungi</taxon>
        <taxon>Dikarya</taxon>
        <taxon>Ascomycota</taxon>
        <taxon>Saccharomycotina</taxon>
        <taxon>Saccharomycetes</taxon>
        <taxon>Saccharomycetales</taxon>
        <taxon>Saccharomycetaceae</taxon>
        <taxon>Eremothecium</taxon>
    </lineage>
</organism>
<protein>
    <recommendedName>
        <fullName>U3 small nucleolar RNA-associated protein 10</fullName>
    </recommendedName>
</protein>